<feature type="chain" id="PRO_0000342257" description="LL-diaminopimelate aminotransferase">
    <location>
        <begin position="1"/>
        <end position="411"/>
    </location>
</feature>
<feature type="binding site" evidence="1">
    <location>
        <position position="16"/>
    </location>
    <ligand>
        <name>substrate</name>
    </ligand>
</feature>
<feature type="binding site" evidence="1">
    <location>
        <position position="43"/>
    </location>
    <ligand>
        <name>substrate</name>
    </ligand>
</feature>
<feature type="binding site" evidence="1">
    <location>
        <position position="73"/>
    </location>
    <ligand>
        <name>pyridoxal 5'-phosphate</name>
        <dbReference type="ChEBI" id="CHEBI:597326"/>
    </ligand>
</feature>
<feature type="binding site" evidence="1">
    <location>
        <begin position="109"/>
        <end position="110"/>
    </location>
    <ligand>
        <name>pyridoxal 5'-phosphate</name>
        <dbReference type="ChEBI" id="CHEBI:597326"/>
    </ligand>
</feature>
<feature type="binding site" evidence="1">
    <location>
        <position position="110"/>
    </location>
    <ligand>
        <name>substrate</name>
    </ligand>
</feature>
<feature type="binding site" evidence="1">
    <location>
        <position position="133"/>
    </location>
    <ligand>
        <name>pyridoxal 5'-phosphate</name>
        <dbReference type="ChEBI" id="CHEBI:597326"/>
    </ligand>
</feature>
<feature type="binding site" evidence="1">
    <location>
        <position position="133"/>
    </location>
    <ligand>
        <name>substrate</name>
    </ligand>
</feature>
<feature type="binding site" evidence="1">
    <location>
        <position position="188"/>
    </location>
    <ligand>
        <name>pyridoxal 5'-phosphate</name>
        <dbReference type="ChEBI" id="CHEBI:597326"/>
    </ligand>
</feature>
<feature type="binding site" evidence="1">
    <location>
        <position position="188"/>
    </location>
    <ligand>
        <name>substrate</name>
    </ligand>
</feature>
<feature type="binding site" evidence="1">
    <location>
        <position position="219"/>
    </location>
    <ligand>
        <name>pyridoxal 5'-phosphate</name>
        <dbReference type="ChEBI" id="CHEBI:597326"/>
    </ligand>
</feature>
<feature type="binding site" evidence="1">
    <location>
        <begin position="247"/>
        <end position="249"/>
    </location>
    <ligand>
        <name>pyridoxal 5'-phosphate</name>
        <dbReference type="ChEBI" id="CHEBI:597326"/>
    </ligand>
</feature>
<feature type="binding site" evidence="1">
    <location>
        <position position="258"/>
    </location>
    <ligand>
        <name>pyridoxal 5'-phosphate</name>
        <dbReference type="ChEBI" id="CHEBI:597326"/>
    </ligand>
</feature>
<feature type="binding site" evidence="1">
    <location>
        <position position="293"/>
    </location>
    <ligand>
        <name>pyridoxal 5'-phosphate</name>
        <dbReference type="ChEBI" id="CHEBI:597326"/>
    </ligand>
</feature>
<feature type="binding site" evidence="1">
    <location>
        <position position="293"/>
    </location>
    <ligand>
        <name>substrate</name>
    </ligand>
</feature>
<feature type="binding site" evidence="1">
    <location>
        <position position="389"/>
    </location>
    <ligand>
        <name>substrate</name>
    </ligand>
</feature>
<feature type="modified residue" description="N6-(pyridoxal phosphate)lysine" evidence="1">
    <location>
        <position position="250"/>
    </location>
</feature>
<dbReference type="EC" id="2.6.1.83" evidence="1"/>
<dbReference type="EMBL" id="CP000678">
    <property type="protein sequence ID" value="ABQ87660.1"/>
    <property type="molecule type" value="Genomic_DNA"/>
</dbReference>
<dbReference type="RefSeq" id="WP_004033324.1">
    <property type="nucleotide sequence ID" value="NZ_CP117965.1"/>
</dbReference>
<dbReference type="SMR" id="A5UN82"/>
<dbReference type="STRING" id="420247.Msm_1455"/>
<dbReference type="EnsemblBacteria" id="ABQ87660">
    <property type="protein sequence ID" value="ABQ87660"/>
    <property type="gene ID" value="Msm_1455"/>
</dbReference>
<dbReference type="KEGG" id="msi:Msm_1455"/>
<dbReference type="PATRIC" id="fig|420247.28.peg.1449"/>
<dbReference type="eggNOG" id="arCOG01133">
    <property type="taxonomic scope" value="Archaea"/>
</dbReference>
<dbReference type="HOGENOM" id="CLU_051433_0_0_2"/>
<dbReference type="UniPathway" id="UPA00034">
    <property type="reaction ID" value="UER00466"/>
</dbReference>
<dbReference type="Proteomes" id="UP000001992">
    <property type="component" value="Chromosome"/>
</dbReference>
<dbReference type="GO" id="GO:0010285">
    <property type="term" value="F:L,L-diaminopimelate aminotransferase activity"/>
    <property type="evidence" value="ECO:0007669"/>
    <property type="project" value="UniProtKB-UniRule"/>
</dbReference>
<dbReference type="GO" id="GO:0030170">
    <property type="term" value="F:pyridoxal phosphate binding"/>
    <property type="evidence" value="ECO:0007669"/>
    <property type="project" value="UniProtKB-UniRule"/>
</dbReference>
<dbReference type="GO" id="GO:0033362">
    <property type="term" value="P:lysine biosynthetic process via diaminopimelate, diaminopimelate-aminotransferase pathway"/>
    <property type="evidence" value="ECO:0007669"/>
    <property type="project" value="UniProtKB-UniRule"/>
</dbReference>
<dbReference type="CDD" id="cd00609">
    <property type="entry name" value="AAT_like"/>
    <property type="match status" value="1"/>
</dbReference>
<dbReference type="FunFam" id="3.40.640.10:FF:000099">
    <property type="entry name" value="LL-diaminopimelate aminotransferase, chloroplastic"/>
    <property type="match status" value="1"/>
</dbReference>
<dbReference type="Gene3D" id="3.90.1150.10">
    <property type="entry name" value="Aspartate Aminotransferase, domain 1"/>
    <property type="match status" value="1"/>
</dbReference>
<dbReference type="Gene3D" id="3.40.640.10">
    <property type="entry name" value="Type I PLP-dependent aspartate aminotransferase-like (Major domain)"/>
    <property type="match status" value="1"/>
</dbReference>
<dbReference type="HAMAP" id="MF_01642">
    <property type="entry name" value="DapL_aminotrans_1"/>
    <property type="match status" value="1"/>
</dbReference>
<dbReference type="InterPro" id="IPR004839">
    <property type="entry name" value="Aminotransferase_I/II_large"/>
</dbReference>
<dbReference type="InterPro" id="IPR019942">
    <property type="entry name" value="DapL/ALD1"/>
</dbReference>
<dbReference type="InterPro" id="IPR015424">
    <property type="entry name" value="PyrdxlP-dep_Trfase"/>
</dbReference>
<dbReference type="InterPro" id="IPR015421">
    <property type="entry name" value="PyrdxlP-dep_Trfase_major"/>
</dbReference>
<dbReference type="InterPro" id="IPR015422">
    <property type="entry name" value="PyrdxlP-dep_Trfase_small"/>
</dbReference>
<dbReference type="NCBIfam" id="TIGR03542">
    <property type="entry name" value="DAPAT_plant"/>
    <property type="match status" value="1"/>
</dbReference>
<dbReference type="PANTHER" id="PTHR43144">
    <property type="entry name" value="AMINOTRANSFERASE"/>
    <property type="match status" value="1"/>
</dbReference>
<dbReference type="Pfam" id="PF00155">
    <property type="entry name" value="Aminotran_1_2"/>
    <property type="match status" value="1"/>
</dbReference>
<dbReference type="SUPFAM" id="SSF53383">
    <property type="entry name" value="PLP-dependent transferases"/>
    <property type="match status" value="1"/>
</dbReference>
<reference key="1">
    <citation type="journal article" date="2007" name="Proc. Natl. Acad. Sci. U.S.A.">
        <title>Genomic and metabolic adaptations of Methanobrevibacter smithii to the human gut.</title>
        <authorList>
            <person name="Samuel B.S."/>
            <person name="Hansen E.E."/>
            <person name="Manchester J.K."/>
            <person name="Coutinho P.M."/>
            <person name="Henrissat B."/>
            <person name="Fulton R."/>
            <person name="Latreille P."/>
            <person name="Kim K."/>
            <person name="Wilson R.K."/>
            <person name="Gordon J.I."/>
        </authorList>
    </citation>
    <scope>NUCLEOTIDE SEQUENCE [LARGE SCALE GENOMIC DNA]</scope>
    <source>
        <strain>ATCC 35061 / DSM 861 / OCM 144 / PS</strain>
    </source>
</reference>
<keyword id="KW-0032">Aminotransferase</keyword>
<keyword id="KW-0663">Pyridoxal phosphate</keyword>
<keyword id="KW-0808">Transferase</keyword>
<organism>
    <name type="scientific">Methanobrevibacter smithii (strain ATCC 35061 / DSM 861 / OCM 144 / PS)</name>
    <dbReference type="NCBI Taxonomy" id="420247"/>
    <lineage>
        <taxon>Archaea</taxon>
        <taxon>Methanobacteriati</taxon>
        <taxon>Methanobacteriota</taxon>
        <taxon>Methanomada group</taxon>
        <taxon>Methanobacteria</taxon>
        <taxon>Methanobacteriales</taxon>
        <taxon>Methanobacteriaceae</taxon>
        <taxon>Methanobrevibacter</taxon>
    </lineage>
</organism>
<name>DAPAT_METS3</name>
<accession>A5UN82</accession>
<proteinExistence type="inferred from homology"/>
<protein>
    <recommendedName>
        <fullName evidence="1">LL-diaminopimelate aminotransferase</fullName>
        <shortName evidence="1">DAP-AT</shortName>
        <shortName evidence="1">DAP-aminotransferase</shortName>
        <shortName evidence="1">LL-DAP-aminotransferase</shortName>
        <ecNumber evidence="1">2.6.1.83</ecNumber>
    </recommendedName>
</protein>
<sequence>MVVKINENYLKLKSSYLFVEVARREAEFQKNNPDADIIKMGIGDVTKPLAPSVIKAFQGAVDEMGNADTFRGYGPEQGYDFLAEEIIKNDFEPFGVSLDTDEVFISDGAKCDTGNIQEIFDLGNKIAVTDPVYTVYVDTNVMAGRTGEMKDDGMYEGLTYLKCNAENGFVPELPEEDVDIIYLCYPNNPTGTTLTYDQLKVFVDYAIEHKAIILFDAAYECFIREDDVPHTIYEIEGAKNVAIEFRSFSKMAGFTGTRCAYTVVPKEVAGYDSKGNEVQLNQLWNRRQTTKFNGVSYPVQVAAAAVYSDDGKKEIKEIIDYYMENAKVIKSSLEKLGLEVYGGVNSPYIWVKTPNNMDSWAFFDLLLNEANVVGTPGSGFGPSGEGYLRLTAFNTLENTKEAMDRISKLNF</sequence>
<comment type="function">
    <text evidence="1">Involved in the synthesis of meso-diaminopimelate (m-DAP or DL-DAP), required for both lysine and peptidoglycan biosynthesis. Catalyzes the direct conversion of tetrahydrodipicolinate to LL-diaminopimelate.</text>
</comment>
<comment type="catalytic activity">
    <reaction evidence="1">
        <text>(2S,6S)-2,6-diaminopimelate + 2-oxoglutarate = (S)-2,3,4,5-tetrahydrodipicolinate + L-glutamate + H2O + H(+)</text>
        <dbReference type="Rhea" id="RHEA:23988"/>
        <dbReference type="ChEBI" id="CHEBI:15377"/>
        <dbReference type="ChEBI" id="CHEBI:15378"/>
        <dbReference type="ChEBI" id="CHEBI:16810"/>
        <dbReference type="ChEBI" id="CHEBI:16845"/>
        <dbReference type="ChEBI" id="CHEBI:29985"/>
        <dbReference type="ChEBI" id="CHEBI:57609"/>
        <dbReference type="EC" id="2.6.1.83"/>
    </reaction>
</comment>
<comment type="cofactor">
    <cofactor evidence="1">
        <name>pyridoxal 5'-phosphate</name>
        <dbReference type="ChEBI" id="CHEBI:597326"/>
    </cofactor>
</comment>
<comment type="pathway">
    <text evidence="1">Amino-acid biosynthesis; L-lysine biosynthesis via DAP pathway; LL-2,6-diaminopimelate from (S)-tetrahydrodipicolinate (aminotransferase route): step 1/1.</text>
</comment>
<comment type="subunit">
    <text evidence="1">Homodimer.</text>
</comment>
<comment type="similarity">
    <text evidence="1">Belongs to the class-I pyridoxal-phosphate-dependent aminotransferase family. LL-diaminopimelate aminotransferase subfamily.</text>
</comment>
<evidence type="ECO:0000255" key="1">
    <source>
        <dbReference type="HAMAP-Rule" id="MF_01642"/>
    </source>
</evidence>
<gene>
    <name evidence="1" type="primary">dapL</name>
    <name type="ordered locus">Msm_1455</name>
</gene>